<evidence type="ECO:0000255" key="1">
    <source>
        <dbReference type="HAMAP-Rule" id="MF_00014"/>
    </source>
</evidence>
<accession>Q7MUW2</accession>
<keyword id="KW-0143">Chaperone</keyword>
<keyword id="KW-0963">Cytoplasm</keyword>
<keyword id="KW-1185">Reference proteome</keyword>
<keyword id="KW-0690">Ribosome biogenesis</keyword>
<keyword id="KW-0698">rRNA processing</keyword>
<proteinExistence type="inferred from homology"/>
<name>RIMM_PORGI</name>
<gene>
    <name evidence="1" type="primary">rimM</name>
    <name type="ordered locus">PG_1365</name>
</gene>
<comment type="function">
    <text evidence="1">An accessory protein needed during the final step in the assembly of 30S ribosomal subunit, possibly for assembly of the head region. Essential for efficient processing of 16S rRNA. May be needed both before and after RbfA during the maturation of 16S rRNA. It has affinity for free ribosomal 30S subunits but not for 70S ribosomes.</text>
</comment>
<comment type="subunit">
    <text evidence="1">Binds ribosomal protein uS19.</text>
</comment>
<comment type="subcellular location">
    <subcellularLocation>
        <location evidence="1">Cytoplasm</location>
    </subcellularLocation>
</comment>
<comment type="domain">
    <text evidence="1">The PRC barrel domain binds ribosomal protein uS19.</text>
</comment>
<comment type="similarity">
    <text evidence="1">Belongs to the RimM family.</text>
</comment>
<sequence>MIDLDSLEHIGVLGKPHGVQGECNARLTADLSTLFEEEERLFLFFELDALPVPFRLIGYREKTDDITLLRFAGIESKEEMEQYTGVSLFMERRYFDTDSIEFTWEHFIGFTVFDREGCFVGTIDDVDESTLNVLLSITTPEGKELLLPVAEDLLEEIDVPNRKLTMIIPDGLLQL</sequence>
<feature type="chain" id="PRO_0000163330" description="Ribosome maturation factor RimM">
    <location>
        <begin position="1"/>
        <end position="175"/>
    </location>
</feature>
<feature type="domain" description="PRC barrel" evidence="1">
    <location>
        <begin position="99"/>
        <end position="172"/>
    </location>
</feature>
<reference key="1">
    <citation type="journal article" date="2003" name="J. Bacteriol.">
        <title>Complete genome sequence of the oral pathogenic bacterium Porphyromonas gingivalis strain W83.</title>
        <authorList>
            <person name="Nelson K.E."/>
            <person name="Fleischmann R.D."/>
            <person name="DeBoy R.T."/>
            <person name="Paulsen I.T."/>
            <person name="Fouts D.E."/>
            <person name="Eisen J.A."/>
            <person name="Daugherty S.C."/>
            <person name="Dodson R.J."/>
            <person name="Durkin A.S."/>
            <person name="Gwinn M.L."/>
            <person name="Haft D.H."/>
            <person name="Kolonay J.F."/>
            <person name="Nelson W.C."/>
            <person name="Mason T.M."/>
            <person name="Tallon L."/>
            <person name="Gray J."/>
            <person name="Granger D."/>
            <person name="Tettelin H."/>
            <person name="Dong H."/>
            <person name="Galvin J.L."/>
            <person name="Duncan M.J."/>
            <person name="Dewhirst F.E."/>
            <person name="Fraser C.M."/>
        </authorList>
    </citation>
    <scope>NUCLEOTIDE SEQUENCE [LARGE SCALE GENOMIC DNA]</scope>
    <source>
        <strain>ATCC BAA-308 / W83</strain>
    </source>
</reference>
<organism>
    <name type="scientific">Porphyromonas gingivalis (strain ATCC BAA-308 / W83)</name>
    <dbReference type="NCBI Taxonomy" id="242619"/>
    <lineage>
        <taxon>Bacteria</taxon>
        <taxon>Pseudomonadati</taxon>
        <taxon>Bacteroidota</taxon>
        <taxon>Bacteroidia</taxon>
        <taxon>Bacteroidales</taxon>
        <taxon>Porphyromonadaceae</taxon>
        <taxon>Porphyromonas</taxon>
    </lineage>
</organism>
<protein>
    <recommendedName>
        <fullName evidence="1">Ribosome maturation factor RimM</fullName>
    </recommendedName>
</protein>
<dbReference type="EMBL" id="AE015924">
    <property type="protein sequence ID" value="AAQ66429.1"/>
    <property type="molecule type" value="Genomic_DNA"/>
</dbReference>
<dbReference type="RefSeq" id="WP_005874311.1">
    <property type="nucleotide sequence ID" value="NC_002950.2"/>
</dbReference>
<dbReference type="SMR" id="Q7MUW2"/>
<dbReference type="STRING" id="242619.PG_1365"/>
<dbReference type="DNASU" id="2551649"/>
<dbReference type="EnsemblBacteria" id="AAQ66429">
    <property type="protein sequence ID" value="AAQ66429"/>
    <property type="gene ID" value="PG_1365"/>
</dbReference>
<dbReference type="KEGG" id="pgi:PG_1365"/>
<dbReference type="PATRIC" id="fig|242619.8.peg.1270"/>
<dbReference type="eggNOG" id="COG0806">
    <property type="taxonomic scope" value="Bacteria"/>
</dbReference>
<dbReference type="HOGENOM" id="CLU_077636_4_2_10"/>
<dbReference type="BioCyc" id="PGIN242619:G1G02-1271-MONOMER"/>
<dbReference type="Proteomes" id="UP000000588">
    <property type="component" value="Chromosome"/>
</dbReference>
<dbReference type="GO" id="GO:0005737">
    <property type="term" value="C:cytoplasm"/>
    <property type="evidence" value="ECO:0007669"/>
    <property type="project" value="UniProtKB-SubCell"/>
</dbReference>
<dbReference type="GO" id="GO:0005840">
    <property type="term" value="C:ribosome"/>
    <property type="evidence" value="ECO:0007669"/>
    <property type="project" value="InterPro"/>
</dbReference>
<dbReference type="GO" id="GO:0043022">
    <property type="term" value="F:ribosome binding"/>
    <property type="evidence" value="ECO:0007669"/>
    <property type="project" value="InterPro"/>
</dbReference>
<dbReference type="GO" id="GO:0042274">
    <property type="term" value="P:ribosomal small subunit biogenesis"/>
    <property type="evidence" value="ECO:0007669"/>
    <property type="project" value="UniProtKB-UniRule"/>
</dbReference>
<dbReference type="GO" id="GO:0006364">
    <property type="term" value="P:rRNA processing"/>
    <property type="evidence" value="ECO:0007669"/>
    <property type="project" value="UniProtKB-UniRule"/>
</dbReference>
<dbReference type="Gene3D" id="2.30.30.240">
    <property type="entry name" value="PRC-barrel domain"/>
    <property type="match status" value="1"/>
</dbReference>
<dbReference type="Gene3D" id="2.40.30.60">
    <property type="entry name" value="RimM"/>
    <property type="match status" value="1"/>
</dbReference>
<dbReference type="HAMAP" id="MF_00014">
    <property type="entry name" value="Ribosome_mat_RimM"/>
    <property type="match status" value="1"/>
</dbReference>
<dbReference type="InterPro" id="IPR011033">
    <property type="entry name" value="PRC_barrel-like_sf"/>
</dbReference>
<dbReference type="InterPro" id="IPR056792">
    <property type="entry name" value="PRC_RimM"/>
</dbReference>
<dbReference type="InterPro" id="IPR011961">
    <property type="entry name" value="RimM"/>
</dbReference>
<dbReference type="InterPro" id="IPR002676">
    <property type="entry name" value="RimM_N"/>
</dbReference>
<dbReference type="InterPro" id="IPR036976">
    <property type="entry name" value="RimM_N_sf"/>
</dbReference>
<dbReference type="InterPro" id="IPR009000">
    <property type="entry name" value="Transl_B-barrel_sf"/>
</dbReference>
<dbReference type="NCBIfam" id="TIGR02273">
    <property type="entry name" value="16S_RimM"/>
    <property type="match status" value="1"/>
</dbReference>
<dbReference type="PANTHER" id="PTHR33692">
    <property type="entry name" value="RIBOSOME MATURATION FACTOR RIMM"/>
    <property type="match status" value="1"/>
</dbReference>
<dbReference type="PANTHER" id="PTHR33692:SF1">
    <property type="entry name" value="RIBOSOME MATURATION FACTOR RIMM"/>
    <property type="match status" value="1"/>
</dbReference>
<dbReference type="Pfam" id="PF24986">
    <property type="entry name" value="PRC_RimM"/>
    <property type="match status" value="1"/>
</dbReference>
<dbReference type="Pfam" id="PF01782">
    <property type="entry name" value="RimM"/>
    <property type="match status" value="1"/>
</dbReference>
<dbReference type="SUPFAM" id="SSF50346">
    <property type="entry name" value="PRC-barrel domain"/>
    <property type="match status" value="1"/>
</dbReference>
<dbReference type="SUPFAM" id="SSF50447">
    <property type="entry name" value="Translation proteins"/>
    <property type="match status" value="1"/>
</dbReference>